<protein>
    <recommendedName>
        <fullName>IAA-amino acid hydrolase ILR1-like 9</fullName>
        <ecNumber>3.5.1.-</ecNumber>
    </recommendedName>
</protein>
<evidence type="ECO:0000250" key="1"/>
<evidence type="ECO:0000255" key="2"/>
<evidence type="ECO:0000305" key="3"/>
<dbReference type="EC" id="3.5.1.-"/>
<dbReference type="EMBL" id="AP005183">
    <property type="protein sequence ID" value="BAC20816.1"/>
    <property type="status" value="ALT_SEQ"/>
    <property type="molecule type" value="Genomic_DNA"/>
</dbReference>
<dbReference type="EMBL" id="AP005183">
    <property type="protein sequence ID" value="BAD73819.1"/>
    <property type="status" value="ALT_SEQ"/>
    <property type="molecule type" value="Genomic_DNA"/>
</dbReference>
<dbReference type="EMBL" id="AP008213">
    <property type="protein sequence ID" value="BAF21209.1"/>
    <property type="status" value="ALT_SEQ"/>
    <property type="molecule type" value="Genomic_DNA"/>
</dbReference>
<dbReference type="EMBL" id="AP014963">
    <property type="status" value="NOT_ANNOTATED_CDS"/>
    <property type="molecule type" value="Genomic_DNA"/>
</dbReference>
<dbReference type="EMBL" id="AK110676">
    <property type="status" value="NOT_ANNOTATED_CDS"/>
    <property type="molecule type" value="mRNA"/>
</dbReference>
<dbReference type="SMR" id="Q8H3C7"/>
<dbReference type="FunCoup" id="Q8H3C7">
    <property type="interactions" value="421"/>
</dbReference>
<dbReference type="STRING" id="39947.Q8H3C7"/>
<dbReference type="MEROPS" id="M20.A02"/>
<dbReference type="PaxDb" id="39947-Q8H3C7"/>
<dbReference type="KEGG" id="dosa:Os07g0249900"/>
<dbReference type="eggNOG" id="ENOG502QQEM">
    <property type="taxonomic scope" value="Eukaryota"/>
</dbReference>
<dbReference type="InParanoid" id="Q8H3C7"/>
<dbReference type="Proteomes" id="UP000000763">
    <property type="component" value="Chromosome 7"/>
</dbReference>
<dbReference type="Proteomes" id="UP000059680">
    <property type="component" value="Chromosome 7"/>
</dbReference>
<dbReference type="GO" id="GO:0010179">
    <property type="term" value="F:IAA-Ala conjugate hydrolase activity"/>
    <property type="evidence" value="ECO:0000318"/>
    <property type="project" value="GO_Central"/>
</dbReference>
<dbReference type="GO" id="GO:0009850">
    <property type="term" value="P:auxin metabolic process"/>
    <property type="evidence" value="ECO:0000318"/>
    <property type="project" value="GO_Central"/>
</dbReference>
<dbReference type="CDD" id="cd08017">
    <property type="entry name" value="M20_IAA_Hyd"/>
    <property type="match status" value="1"/>
</dbReference>
<dbReference type="FunFam" id="3.30.70.360:FF:000001">
    <property type="entry name" value="N-acetyldiaminopimelate deacetylase"/>
    <property type="match status" value="1"/>
</dbReference>
<dbReference type="FunFam" id="3.40.630.10:FF:000234">
    <property type="entry name" value="Os07g0249900 protein"/>
    <property type="match status" value="1"/>
</dbReference>
<dbReference type="Gene3D" id="3.30.70.360">
    <property type="match status" value="1"/>
</dbReference>
<dbReference type="Gene3D" id="3.40.630.10">
    <property type="entry name" value="Zn peptidases"/>
    <property type="match status" value="1"/>
</dbReference>
<dbReference type="InterPro" id="IPR017439">
    <property type="entry name" value="Amidohydrolase"/>
</dbReference>
<dbReference type="InterPro" id="IPR036264">
    <property type="entry name" value="Bact_exopeptidase_dim_dom"/>
</dbReference>
<dbReference type="InterPro" id="IPR044757">
    <property type="entry name" value="ILR1-like_Hyd"/>
</dbReference>
<dbReference type="InterPro" id="IPR002933">
    <property type="entry name" value="Peptidase_M20"/>
</dbReference>
<dbReference type="InterPro" id="IPR011650">
    <property type="entry name" value="Peptidase_M20_dimer"/>
</dbReference>
<dbReference type="NCBIfam" id="TIGR01891">
    <property type="entry name" value="amidohydrolases"/>
    <property type="match status" value="1"/>
</dbReference>
<dbReference type="PANTHER" id="PTHR11014:SF167">
    <property type="entry name" value="IAA-AMINO ACID HYDROLASE ILR1-LIKE 9"/>
    <property type="match status" value="1"/>
</dbReference>
<dbReference type="PANTHER" id="PTHR11014">
    <property type="entry name" value="PEPTIDASE M20 FAMILY MEMBER"/>
    <property type="match status" value="1"/>
</dbReference>
<dbReference type="Pfam" id="PF07687">
    <property type="entry name" value="M20_dimer"/>
    <property type="match status" value="1"/>
</dbReference>
<dbReference type="Pfam" id="PF01546">
    <property type="entry name" value="Peptidase_M20"/>
    <property type="match status" value="1"/>
</dbReference>
<dbReference type="PIRSF" id="PIRSF005962">
    <property type="entry name" value="Pept_M20D_amidohydro"/>
    <property type="match status" value="1"/>
</dbReference>
<dbReference type="SUPFAM" id="SSF55031">
    <property type="entry name" value="Bacterial exopeptidase dimerisation domain"/>
    <property type="match status" value="1"/>
</dbReference>
<dbReference type="SUPFAM" id="SSF53187">
    <property type="entry name" value="Zn-dependent exopeptidases"/>
    <property type="match status" value="1"/>
</dbReference>
<reference key="1">
    <citation type="journal article" date="2005" name="Nature">
        <title>The map-based sequence of the rice genome.</title>
        <authorList>
            <consortium name="International rice genome sequencing project (IRGSP)"/>
        </authorList>
    </citation>
    <scope>NUCLEOTIDE SEQUENCE [LARGE SCALE GENOMIC DNA]</scope>
    <source>
        <strain>cv. Nipponbare</strain>
    </source>
</reference>
<reference key="2">
    <citation type="journal article" date="2008" name="Nucleic Acids Res.">
        <title>The rice annotation project database (RAP-DB): 2008 update.</title>
        <authorList>
            <consortium name="The rice annotation project (RAP)"/>
        </authorList>
    </citation>
    <scope>GENOME REANNOTATION</scope>
    <source>
        <strain>cv. Nipponbare</strain>
    </source>
</reference>
<reference key="3">
    <citation type="journal article" date="2013" name="Rice">
        <title>Improvement of the Oryza sativa Nipponbare reference genome using next generation sequence and optical map data.</title>
        <authorList>
            <person name="Kawahara Y."/>
            <person name="de la Bastide M."/>
            <person name="Hamilton J.P."/>
            <person name="Kanamori H."/>
            <person name="McCombie W.R."/>
            <person name="Ouyang S."/>
            <person name="Schwartz D.C."/>
            <person name="Tanaka T."/>
            <person name="Wu J."/>
            <person name="Zhou S."/>
            <person name="Childs K.L."/>
            <person name="Davidson R.M."/>
            <person name="Lin H."/>
            <person name="Quesada-Ocampo L."/>
            <person name="Vaillancourt B."/>
            <person name="Sakai H."/>
            <person name="Lee S.S."/>
            <person name="Kim J."/>
            <person name="Numa H."/>
            <person name="Itoh T."/>
            <person name="Buell C.R."/>
            <person name="Matsumoto T."/>
        </authorList>
    </citation>
    <scope>GENOME REANNOTATION</scope>
    <source>
        <strain>cv. Nipponbare</strain>
    </source>
</reference>
<reference key="4">
    <citation type="journal article" date="2003" name="Science">
        <title>Collection, mapping, and annotation of over 28,000 cDNA clones from japonica rice.</title>
        <authorList>
            <consortium name="The rice full-length cDNA consortium"/>
        </authorList>
    </citation>
    <scope>NUCLEOTIDE SEQUENCE [LARGE SCALE MRNA] OF 282-440</scope>
    <source>
        <strain>cv. Nipponbare</strain>
    </source>
</reference>
<proteinExistence type="evidence at transcript level"/>
<sequence>MAASSSSTTRLIPLLLVLTFCLALASASAWAAAAGDDDLLAAAREPGMAEWLRGVRRRIHRHPELAFEEVRTSELVRAELDAIGVPYQWPVARTGVVATIAGGGGGDGPVVALRADMDALPVQELVDWEHKSQENGKMHACGHDAHTAMLLGAAKLLQKRKNELKGTVKLVFQPAEEGSAGAYYVLQEGVLDDVSAMFGMHVDPALPVGVVAARPGPFAATSGRFLATITGKGGHAAFPHDAIDPVVAASNAILSLQQIVAREIDPLQGAVVSITFVKGGEAYNVIPQSVEFGGTMRSMTDEGLAYLMKRIKEIVEGQAAVNRCGGGVDFMEESMRPYPAVVNDEGMYAHARASAERLLGAGGVRVAPQLMGAEDFGFYAARMPSAFFTIGVGNATTSSARAAHTTHSPHFVIDEAALPVGAAVHAAVAIDYLSKHASSM</sequence>
<accession>Q8H3C7</accession>
<accession>Q0D7G4</accession>
<accession>Q5QL89</accession>
<gene>
    <name type="primary">ILL9</name>
    <name type="ordered locus">Os07g0249900</name>
    <name type="ordered locus">LOC_Os07g14610</name>
    <name type="ORF">P0021G06.116-1</name>
    <name type="ORF">P0021G06.116-2</name>
</gene>
<organism>
    <name type="scientific">Oryza sativa subsp. japonica</name>
    <name type="common">Rice</name>
    <dbReference type="NCBI Taxonomy" id="39947"/>
    <lineage>
        <taxon>Eukaryota</taxon>
        <taxon>Viridiplantae</taxon>
        <taxon>Streptophyta</taxon>
        <taxon>Embryophyta</taxon>
        <taxon>Tracheophyta</taxon>
        <taxon>Spermatophyta</taxon>
        <taxon>Magnoliopsida</taxon>
        <taxon>Liliopsida</taxon>
        <taxon>Poales</taxon>
        <taxon>Poaceae</taxon>
        <taxon>BOP clade</taxon>
        <taxon>Oryzoideae</taxon>
        <taxon>Oryzeae</taxon>
        <taxon>Oryzinae</taxon>
        <taxon>Oryza</taxon>
        <taxon>Oryza sativa</taxon>
    </lineage>
</organism>
<name>ILL9_ORYSJ</name>
<feature type="signal peptide" evidence="2">
    <location>
        <begin position="1"/>
        <end position="27"/>
    </location>
</feature>
<feature type="chain" id="PRO_0000351645" description="IAA-amino acid hydrolase ILR1-like 9">
    <location>
        <begin position="28"/>
        <end position="440"/>
    </location>
</feature>
<comment type="function">
    <text evidence="1">Hydrolyzes certain amino acid conjugates of the plant growth regulator indole-3-acetic acid (IAA).</text>
</comment>
<comment type="similarity">
    <text evidence="3">Belongs to the peptidase M20 family.</text>
</comment>
<comment type="sequence caution" evidence="3">
    <conflict type="erroneous gene model prediction">
        <sequence resource="EMBL-CDS" id="BAC20816"/>
    </conflict>
</comment>
<comment type="sequence caution" evidence="3">
    <conflict type="erroneous gene model prediction">
        <sequence resource="EMBL-CDS" id="BAD73819"/>
    </conflict>
</comment>
<comment type="sequence caution" evidence="3">
    <conflict type="erroneous gene model prediction">
        <sequence resource="EMBL-CDS" id="BAF21209"/>
    </conflict>
</comment>
<keyword id="KW-0378">Hydrolase</keyword>
<keyword id="KW-1185">Reference proteome</keyword>
<keyword id="KW-0732">Signal</keyword>